<dbReference type="EC" id="1.3.1.78"/>
<dbReference type="EMBL" id="AF434682">
    <property type="protein sequence ID" value="AAL30406.1"/>
    <property type="molecule type" value="mRNA"/>
</dbReference>
<dbReference type="EMBL" id="AC034256">
    <property type="protein sequence ID" value="AAF82141.1"/>
    <property type="molecule type" value="Genomic_DNA"/>
</dbReference>
<dbReference type="EMBL" id="CP002684">
    <property type="protein sequence ID" value="AEE29352.1"/>
    <property type="molecule type" value="Genomic_DNA"/>
</dbReference>
<dbReference type="EMBL" id="AK221665">
    <property type="protein sequence ID" value="BAD95346.1"/>
    <property type="molecule type" value="mRNA"/>
</dbReference>
<dbReference type="EMBL" id="AY123984">
    <property type="protein sequence ID" value="AAM74497.1"/>
    <property type="molecule type" value="mRNA"/>
</dbReference>
<dbReference type="EMBL" id="BT000566">
    <property type="protein sequence ID" value="AAN18135.1"/>
    <property type="molecule type" value="mRNA"/>
</dbReference>
<dbReference type="PIR" id="C86291">
    <property type="entry name" value="C86291"/>
</dbReference>
<dbReference type="RefSeq" id="NP_173023.1">
    <property type="nucleotide sequence ID" value="NM_101439.5"/>
</dbReference>
<dbReference type="SMR" id="Q9LMR3"/>
<dbReference type="BioGRID" id="23380">
    <property type="interactions" value="4"/>
</dbReference>
<dbReference type="FunCoup" id="Q9LMR3">
    <property type="interactions" value="263"/>
</dbReference>
<dbReference type="IntAct" id="Q9LMR3">
    <property type="interactions" value="4"/>
</dbReference>
<dbReference type="STRING" id="3702.Q9LMR3"/>
<dbReference type="PaxDb" id="3702-AT1G15710.1"/>
<dbReference type="ProteomicsDB" id="242602"/>
<dbReference type="EnsemblPlants" id="AT1G15710.1">
    <property type="protein sequence ID" value="AT1G15710.1"/>
    <property type="gene ID" value="AT1G15710"/>
</dbReference>
<dbReference type="GeneID" id="838140"/>
<dbReference type="Gramene" id="AT1G15710.1">
    <property type="protein sequence ID" value="AT1G15710.1"/>
    <property type="gene ID" value="AT1G15710"/>
</dbReference>
<dbReference type="KEGG" id="ath:AT1G15710"/>
<dbReference type="Araport" id="AT1G15710"/>
<dbReference type="TAIR" id="AT1G15710"/>
<dbReference type="eggNOG" id="KOG2380">
    <property type="taxonomic scope" value="Eukaryota"/>
</dbReference>
<dbReference type="HOGENOM" id="CLU_036672_0_1_1"/>
<dbReference type="InParanoid" id="Q9LMR3"/>
<dbReference type="OMA" id="CLHPMFG"/>
<dbReference type="PhylomeDB" id="Q9LMR3"/>
<dbReference type="BioCyc" id="ARA:AT1G15710-MONOMER"/>
<dbReference type="BioCyc" id="MetaCyc:AT1G15710-MONOMER"/>
<dbReference type="BRENDA" id="1.3.1.78">
    <property type="organism ID" value="399"/>
</dbReference>
<dbReference type="SABIO-RK" id="Q9LMR3"/>
<dbReference type="UniPathway" id="UPA00122">
    <property type="reaction ID" value="UER00960"/>
</dbReference>
<dbReference type="PRO" id="PR:Q9LMR3"/>
<dbReference type="Proteomes" id="UP000006548">
    <property type="component" value="Chromosome 1"/>
</dbReference>
<dbReference type="ExpressionAtlas" id="Q9LMR3">
    <property type="expression patterns" value="baseline and differential"/>
</dbReference>
<dbReference type="GO" id="GO:0009507">
    <property type="term" value="C:chloroplast"/>
    <property type="evidence" value="ECO:0007005"/>
    <property type="project" value="TAIR"/>
</dbReference>
<dbReference type="GO" id="GO:0033730">
    <property type="term" value="F:arogenate dehydrogenase (NADP+) activity"/>
    <property type="evidence" value="ECO:0007669"/>
    <property type="project" value="UniProtKB-EC"/>
</dbReference>
<dbReference type="GO" id="GO:0070403">
    <property type="term" value="F:NAD+ binding"/>
    <property type="evidence" value="ECO:0007669"/>
    <property type="project" value="InterPro"/>
</dbReference>
<dbReference type="GO" id="GO:0008977">
    <property type="term" value="F:prephenate dehydrogenase (NAD+) activity"/>
    <property type="evidence" value="ECO:0007669"/>
    <property type="project" value="InterPro"/>
</dbReference>
<dbReference type="GO" id="GO:0004665">
    <property type="term" value="F:prephenate dehydrogenase (NADP+) activity"/>
    <property type="evidence" value="ECO:0007669"/>
    <property type="project" value="InterPro"/>
</dbReference>
<dbReference type="GO" id="GO:0006571">
    <property type="term" value="P:tyrosine biosynthetic process"/>
    <property type="evidence" value="ECO:0007669"/>
    <property type="project" value="UniProtKB-UniPathway"/>
</dbReference>
<dbReference type="Gene3D" id="3.40.50.720">
    <property type="entry name" value="NAD(P)-binding Rossmann-like Domain"/>
    <property type="match status" value="1"/>
</dbReference>
<dbReference type="InterPro" id="IPR008927">
    <property type="entry name" value="6-PGluconate_DH-like_C_sf"/>
</dbReference>
<dbReference type="InterPro" id="IPR012070">
    <property type="entry name" value="Arogenate_DH_2"/>
</dbReference>
<dbReference type="InterPro" id="IPR036291">
    <property type="entry name" value="NAD(P)-bd_dom_sf"/>
</dbReference>
<dbReference type="InterPro" id="IPR046826">
    <property type="entry name" value="PDH_N"/>
</dbReference>
<dbReference type="InterPro" id="IPR003099">
    <property type="entry name" value="Prephen_DH"/>
</dbReference>
<dbReference type="InterPro" id="IPR045011">
    <property type="entry name" value="TYRAAT1/2"/>
</dbReference>
<dbReference type="PANTHER" id="PTHR43207:SF4">
    <property type="entry name" value="AROGENATE DEHYDROGENASE 2, CHLOROPLASTIC"/>
    <property type="match status" value="1"/>
</dbReference>
<dbReference type="PANTHER" id="PTHR43207">
    <property type="entry name" value="AROGENATE DEHYDROGENASE-RELATED"/>
    <property type="match status" value="1"/>
</dbReference>
<dbReference type="Pfam" id="PF02153">
    <property type="entry name" value="PDH_N"/>
    <property type="match status" value="1"/>
</dbReference>
<dbReference type="PIRSF" id="PIRSF036577">
    <property type="entry name" value="PDH_ADH_plant"/>
    <property type="match status" value="1"/>
</dbReference>
<dbReference type="SUPFAM" id="SSF48179">
    <property type="entry name" value="6-phosphogluconate dehydrogenase C-terminal domain-like"/>
    <property type="match status" value="1"/>
</dbReference>
<dbReference type="SUPFAM" id="SSF51735">
    <property type="entry name" value="NAD(P)-binding Rossmann-fold domains"/>
    <property type="match status" value="1"/>
</dbReference>
<dbReference type="PROSITE" id="PS51176">
    <property type="entry name" value="PDH_ADH"/>
    <property type="match status" value="1"/>
</dbReference>
<organism>
    <name type="scientific">Arabidopsis thaliana</name>
    <name type="common">Mouse-ear cress</name>
    <dbReference type="NCBI Taxonomy" id="3702"/>
    <lineage>
        <taxon>Eukaryota</taxon>
        <taxon>Viridiplantae</taxon>
        <taxon>Streptophyta</taxon>
        <taxon>Embryophyta</taxon>
        <taxon>Tracheophyta</taxon>
        <taxon>Spermatophyta</taxon>
        <taxon>Magnoliopsida</taxon>
        <taxon>eudicotyledons</taxon>
        <taxon>Gunneridae</taxon>
        <taxon>Pentapetalae</taxon>
        <taxon>rosids</taxon>
        <taxon>malvids</taxon>
        <taxon>Brassicales</taxon>
        <taxon>Brassicaceae</taxon>
        <taxon>Camelineae</taxon>
        <taxon>Arabidopsis</taxon>
    </lineage>
</organism>
<name>TYRA2_ARATH</name>
<evidence type="ECO:0000255" key="1">
    <source>
        <dbReference type="PROSITE-ProRule" id="PRU00522"/>
    </source>
</evidence>
<evidence type="ECO:0000256" key="2">
    <source>
        <dbReference type="SAM" id="MobiDB-lite"/>
    </source>
</evidence>
<evidence type="ECO:0000269" key="3">
    <source>
    </source>
</evidence>
<evidence type="ECO:0000269" key="4">
    <source>
    </source>
</evidence>
<evidence type="ECO:0000305" key="5"/>
<evidence type="ECO:0007744" key="6">
    <source>
    </source>
</evidence>
<reference key="1">
    <citation type="journal article" date="2002" name="Plant Mol. Biol.">
        <title>Molecular and biochemical characterization of an Arabidopsis thaliana arogenate dehydrogenase with two highly similar and active protein domains.</title>
        <authorList>
            <person name="Rippert P."/>
            <person name="Matringe M."/>
        </authorList>
    </citation>
    <scope>NUCLEOTIDE SEQUENCE [MRNA]</scope>
    <source>
        <strain>cv. Columbia</strain>
    </source>
</reference>
<reference key="2">
    <citation type="journal article" date="2000" name="Nature">
        <title>Sequence and analysis of chromosome 1 of the plant Arabidopsis thaliana.</title>
        <authorList>
            <person name="Theologis A."/>
            <person name="Ecker J.R."/>
            <person name="Palm C.J."/>
            <person name="Federspiel N.A."/>
            <person name="Kaul S."/>
            <person name="White O."/>
            <person name="Alonso J."/>
            <person name="Altafi H."/>
            <person name="Araujo R."/>
            <person name="Bowman C.L."/>
            <person name="Brooks S.Y."/>
            <person name="Buehler E."/>
            <person name="Chan A."/>
            <person name="Chao Q."/>
            <person name="Chen H."/>
            <person name="Cheuk R.F."/>
            <person name="Chin C.W."/>
            <person name="Chung M.K."/>
            <person name="Conn L."/>
            <person name="Conway A.B."/>
            <person name="Conway A.R."/>
            <person name="Creasy T.H."/>
            <person name="Dewar K."/>
            <person name="Dunn P."/>
            <person name="Etgu P."/>
            <person name="Feldblyum T.V."/>
            <person name="Feng J.-D."/>
            <person name="Fong B."/>
            <person name="Fujii C.Y."/>
            <person name="Gill J.E."/>
            <person name="Goldsmith A.D."/>
            <person name="Haas B."/>
            <person name="Hansen N.F."/>
            <person name="Hughes B."/>
            <person name="Huizar L."/>
            <person name="Hunter J.L."/>
            <person name="Jenkins J."/>
            <person name="Johnson-Hopson C."/>
            <person name="Khan S."/>
            <person name="Khaykin E."/>
            <person name="Kim C.J."/>
            <person name="Koo H.L."/>
            <person name="Kremenetskaia I."/>
            <person name="Kurtz D.B."/>
            <person name="Kwan A."/>
            <person name="Lam B."/>
            <person name="Langin-Hooper S."/>
            <person name="Lee A."/>
            <person name="Lee J.M."/>
            <person name="Lenz C.A."/>
            <person name="Li J.H."/>
            <person name="Li Y.-P."/>
            <person name="Lin X."/>
            <person name="Liu S.X."/>
            <person name="Liu Z.A."/>
            <person name="Luros J.S."/>
            <person name="Maiti R."/>
            <person name="Marziali A."/>
            <person name="Militscher J."/>
            <person name="Miranda M."/>
            <person name="Nguyen M."/>
            <person name="Nierman W.C."/>
            <person name="Osborne B.I."/>
            <person name="Pai G."/>
            <person name="Peterson J."/>
            <person name="Pham P.K."/>
            <person name="Rizzo M."/>
            <person name="Rooney T."/>
            <person name="Rowley D."/>
            <person name="Sakano H."/>
            <person name="Salzberg S.L."/>
            <person name="Schwartz J.R."/>
            <person name="Shinn P."/>
            <person name="Southwick A.M."/>
            <person name="Sun H."/>
            <person name="Tallon L.J."/>
            <person name="Tambunga G."/>
            <person name="Toriumi M.J."/>
            <person name="Town C.D."/>
            <person name="Utterback T."/>
            <person name="Van Aken S."/>
            <person name="Vaysberg M."/>
            <person name="Vysotskaia V.S."/>
            <person name="Walker M."/>
            <person name="Wu D."/>
            <person name="Yu G."/>
            <person name="Fraser C.M."/>
            <person name="Venter J.C."/>
            <person name="Davis R.W."/>
        </authorList>
    </citation>
    <scope>NUCLEOTIDE SEQUENCE [LARGE SCALE GENOMIC DNA]</scope>
    <source>
        <strain>cv. Columbia</strain>
    </source>
</reference>
<reference key="3">
    <citation type="journal article" date="2017" name="Plant J.">
        <title>Araport11: a complete reannotation of the Arabidopsis thaliana reference genome.</title>
        <authorList>
            <person name="Cheng C.Y."/>
            <person name="Krishnakumar V."/>
            <person name="Chan A.P."/>
            <person name="Thibaud-Nissen F."/>
            <person name="Schobel S."/>
            <person name="Town C.D."/>
        </authorList>
    </citation>
    <scope>GENOME REANNOTATION</scope>
    <source>
        <strain>cv. Columbia</strain>
    </source>
</reference>
<reference key="4">
    <citation type="journal article" date="2003" name="Science">
        <title>Empirical analysis of transcriptional activity in the Arabidopsis genome.</title>
        <authorList>
            <person name="Yamada K."/>
            <person name="Lim J."/>
            <person name="Dale J.M."/>
            <person name="Chen H."/>
            <person name="Shinn P."/>
            <person name="Palm C.J."/>
            <person name="Southwick A.M."/>
            <person name="Wu H.C."/>
            <person name="Kim C.J."/>
            <person name="Nguyen M."/>
            <person name="Pham P.K."/>
            <person name="Cheuk R.F."/>
            <person name="Karlin-Newmann G."/>
            <person name="Liu S.X."/>
            <person name="Lam B."/>
            <person name="Sakano H."/>
            <person name="Wu T."/>
            <person name="Yu G."/>
            <person name="Miranda M."/>
            <person name="Quach H.L."/>
            <person name="Tripp M."/>
            <person name="Chang C.H."/>
            <person name="Lee J.M."/>
            <person name="Toriumi M.J."/>
            <person name="Chan M.M."/>
            <person name="Tang C.C."/>
            <person name="Onodera C.S."/>
            <person name="Deng J.M."/>
            <person name="Akiyama K."/>
            <person name="Ansari Y."/>
            <person name="Arakawa T."/>
            <person name="Banh J."/>
            <person name="Banno F."/>
            <person name="Bowser L."/>
            <person name="Brooks S.Y."/>
            <person name="Carninci P."/>
            <person name="Chao Q."/>
            <person name="Choy N."/>
            <person name="Enju A."/>
            <person name="Goldsmith A.D."/>
            <person name="Gurjal M."/>
            <person name="Hansen N.F."/>
            <person name="Hayashizaki Y."/>
            <person name="Johnson-Hopson C."/>
            <person name="Hsuan V.W."/>
            <person name="Iida K."/>
            <person name="Karnes M."/>
            <person name="Khan S."/>
            <person name="Koesema E."/>
            <person name="Ishida J."/>
            <person name="Jiang P.X."/>
            <person name="Jones T."/>
            <person name="Kawai J."/>
            <person name="Kamiya A."/>
            <person name="Meyers C."/>
            <person name="Nakajima M."/>
            <person name="Narusaka M."/>
            <person name="Seki M."/>
            <person name="Sakurai T."/>
            <person name="Satou M."/>
            <person name="Tamse R."/>
            <person name="Vaysberg M."/>
            <person name="Wallender E.K."/>
            <person name="Wong C."/>
            <person name="Yamamura Y."/>
            <person name="Yuan S."/>
            <person name="Shinozaki K."/>
            <person name="Davis R.W."/>
            <person name="Theologis A."/>
            <person name="Ecker J.R."/>
        </authorList>
    </citation>
    <scope>NUCLEOTIDE SEQUENCE [LARGE SCALE MRNA]</scope>
    <source>
        <strain>cv. Columbia</strain>
    </source>
</reference>
<reference key="5">
    <citation type="submission" date="2005-03" db="EMBL/GenBank/DDBJ databases">
        <title>Large-scale analysis of RIKEN Arabidopsis full-length (RAFL) cDNAs.</title>
        <authorList>
            <person name="Totoki Y."/>
            <person name="Seki M."/>
            <person name="Ishida J."/>
            <person name="Nakajima M."/>
            <person name="Enju A."/>
            <person name="Kamiya A."/>
            <person name="Narusaka M."/>
            <person name="Shin-i T."/>
            <person name="Nakagawa M."/>
            <person name="Sakamoto N."/>
            <person name="Oishi K."/>
            <person name="Kohara Y."/>
            <person name="Kobayashi M."/>
            <person name="Toyoda A."/>
            <person name="Sakaki Y."/>
            <person name="Sakurai T."/>
            <person name="Iida K."/>
            <person name="Akiyama K."/>
            <person name="Satou M."/>
            <person name="Toyoda T."/>
            <person name="Konagaya A."/>
            <person name="Carninci P."/>
            <person name="Kawai J."/>
            <person name="Hayashizaki Y."/>
            <person name="Shinozaki K."/>
        </authorList>
    </citation>
    <scope>NUCLEOTIDE SEQUENCE [LARGE SCALE MRNA]</scope>
    <source>
        <strain>cv. Columbia</strain>
    </source>
</reference>
<reference key="6">
    <citation type="journal article" date="2002" name="Eur. J. Biochem.">
        <title>Purification and kinetic analysis of the two recombinant arogenate dehydrogenase isoforms of Arabidopsis thaliana.</title>
        <authorList>
            <person name="Rippert P."/>
            <person name="Matringe M."/>
        </authorList>
    </citation>
    <scope>FUNCTION</scope>
    <scope>BIOPHYSICOCHEMICAL PROPERTIES</scope>
</reference>
<reference key="7">
    <citation type="journal article" date="2009" name="Plant Physiol.">
        <title>Tyrosine and phenylalanine are synthesized within the plastids in Arabidopsis.</title>
        <authorList>
            <person name="Rippert P."/>
            <person name="Puyaubert J."/>
            <person name="Grisollet D."/>
            <person name="Derrier L."/>
            <person name="Matringe M."/>
        </authorList>
    </citation>
    <scope>SUBCELLULAR LOCATION</scope>
    <scope>TISSUE SPECIFICITY</scope>
</reference>
<reference key="8">
    <citation type="journal article" date="2012" name="Mol. Cell. Proteomics">
        <title>Comparative large-scale characterisation of plant vs. mammal proteins reveals similar and idiosyncratic N-alpha acetylation features.</title>
        <authorList>
            <person name="Bienvenut W.V."/>
            <person name="Sumpton D."/>
            <person name="Martinez A."/>
            <person name="Lilla S."/>
            <person name="Espagne C."/>
            <person name="Meinnel T."/>
            <person name="Giglione C."/>
        </authorList>
    </citation>
    <scope>CLEAVAGE OF TRANSIT PEPTIDE [LARGE SCALE ANALYSIS] AFTER ALA-36</scope>
    <scope>IDENTIFICATION BY MASS SPECTROMETRY [LARGE SCALE ANALYSIS]</scope>
</reference>
<feature type="transit peptide" description="Chloroplast" evidence="6">
    <location>
        <begin position="1"/>
        <end position="36"/>
    </location>
</feature>
<feature type="chain" id="PRO_0000269678" description="Arogenate dehydrogenase 2, chloroplastic">
    <location>
        <begin position="37"/>
        <end position="358"/>
    </location>
</feature>
<feature type="domain" description="Prephenate/arogenate dehydrogenase" evidence="1">
    <location>
        <begin position="59"/>
        <end position="338"/>
    </location>
</feature>
<feature type="region of interest" description="Disordered" evidence="2">
    <location>
        <begin position="336"/>
        <end position="358"/>
    </location>
</feature>
<feature type="compositionally biased region" description="Low complexity" evidence="2">
    <location>
        <begin position="348"/>
        <end position="358"/>
    </location>
</feature>
<feature type="sequence conflict" description="In Ref. 4; AAM74497/BAD95346 and 5; AAN18135." evidence="5" ref="4 5">
    <original>V</original>
    <variation>F</variation>
    <location>
        <position position="222"/>
    </location>
</feature>
<accession>Q9LMR3</accession>
<accession>Q8L7Z4</accession>
<sequence>MLLHFSPAKPLISPPNLRRNSPTFLISPPRSLRIRAIDAAQIFDYETQLKSEYRKSSALKIAVLGFGNFGQFLSKTLIRHGHDLITHSRSDYSDAANSIGARFFDNPHDLCEQHPDVVLLCTSILSTESVLRSFPFQRLRRSTLFVDVLSVKEFPKALFIKYLPKEFDILCTHPMFGPESGKHSWSGLPFVYDKVRIGDAASRQERCEKFLRIFENEGCKMVEMSCEKHDYYAAGSQFVTHTMGRVLEKYGVESSPINTKGYETLLDLVENTSSDSFELFYGLFMYNPNALEQLERLDMAFESVKKELFGRLHQQYRKQMFGGEVQSPKKTEQKLLNDGGVVPMNDISSSSSSSSSSS</sequence>
<proteinExistence type="evidence at protein level"/>
<protein>
    <recommendedName>
        <fullName>Arogenate dehydrogenase 2, chloroplastic</fullName>
        <ecNumber>1.3.1.78</ecNumber>
    </recommendedName>
    <alternativeName>
        <fullName>TyrAAT2</fullName>
    </alternativeName>
</protein>
<keyword id="KW-0028">Amino-acid biosynthesis</keyword>
<keyword id="KW-0057">Aromatic amino acid biosynthesis</keyword>
<keyword id="KW-0150">Chloroplast</keyword>
<keyword id="KW-0521">NADP</keyword>
<keyword id="KW-0560">Oxidoreductase</keyword>
<keyword id="KW-0934">Plastid</keyword>
<keyword id="KW-1185">Reference proteome</keyword>
<keyword id="KW-0809">Transit peptide</keyword>
<keyword id="KW-0827">Tyrosine biosynthesis</keyword>
<comment type="function">
    <text evidence="3">Involved in the biosynthesis of tyrosine. Has a weak prephenate dehydrogenase activity.</text>
</comment>
<comment type="catalytic activity">
    <reaction>
        <text>L-arogenate + NADP(+) = L-tyrosine + CO2 + NADPH</text>
        <dbReference type="Rhea" id="RHEA:15417"/>
        <dbReference type="ChEBI" id="CHEBI:16526"/>
        <dbReference type="ChEBI" id="CHEBI:57783"/>
        <dbReference type="ChEBI" id="CHEBI:58180"/>
        <dbReference type="ChEBI" id="CHEBI:58315"/>
        <dbReference type="ChEBI" id="CHEBI:58349"/>
        <dbReference type="EC" id="1.3.1.78"/>
    </reaction>
</comment>
<comment type="biophysicochemical properties">
    <kinetics>
        <KM evidence="3">14.3 uM for NADP</KM>
        <KM evidence="3">84.2 uM for arogenate</KM>
        <KM evidence="3">17000 uM for prephenate</KM>
        <Vmax evidence="3">73.0 umol/min/mg enzyme</Vmax>
        <text>NADP increases the apparent affinity for arogenate.</text>
    </kinetics>
</comment>
<comment type="pathway">
    <text>Amino-acid biosynthesis; L-tyrosine biosynthesis; L-tyrosine from L-arogenate (NADP(+) route): step 1/1.</text>
</comment>
<comment type="subcellular location">
    <subcellularLocation>
        <location evidence="4">Plastid</location>
        <location evidence="4">Chloroplast</location>
    </subcellularLocation>
</comment>
<comment type="tissue specificity">
    <text evidence="4">Expressed in roots, stems, leaves, flowers, siliques and seeds. More abundant in seeds.</text>
</comment>
<comment type="induction">
    <text>Strongly inhibited by tyrosine.</text>
</comment>
<comment type="miscellaneous">
    <text>Unlike TYRAAT1, TYRAAT2 is composed of a single catalytically active domain.</text>
</comment>
<comment type="similarity">
    <text evidence="5">Belongs to the prephenate/arogenate dehydrogenase family.</text>
</comment>
<gene>
    <name type="primary">TYRAAT2</name>
    <name type="ordered locus">At1g15710</name>
    <name type="ORF">F7H2.5</name>
</gene>